<sequence length="383" mass="41866">MSLKQHTQTIFRQQFDRESDITIKAPGRVNLIGEHTDYNDGFVLPCAINYETVISCGKRDDRQIRVIAADYENQQDIFSLDAPIVPHPEYRWADYVRGVVKHLQMRNADFGGADLVICGNVPQGAGLSSSASLEVAVGQALQSLYQLPLSGVELALNGQEAENQFVGCNCGIMDQLISALGKKDHALLIDCRTLETRAVPMPENMAVVIINSNIQRGLVDSEYNTRRQQCEAAARFFGVKALRDVEPSLFFSIQDELDPVVAKRARHVISENARTLAAADALAAGNLKLMGQLMQESHISMRDDFEITVPPIDRLVEIVKSVIGDQGGVRMTGGGFGGCIIALMPLELVEQVRTTVAQEYPAHSGGKKETFYVCQASQGAGLC</sequence>
<gene>
    <name evidence="1" type="primary">galK</name>
    <name type="ordered locus">YPN_2863</name>
    <name type="ORF">YP516_3238</name>
</gene>
<reference key="1">
    <citation type="journal article" date="2006" name="J. Bacteriol.">
        <title>Complete genome sequence of Yersinia pestis strains Antiqua and Nepal516: evidence of gene reduction in an emerging pathogen.</title>
        <authorList>
            <person name="Chain P.S.G."/>
            <person name="Hu P."/>
            <person name="Malfatti S.A."/>
            <person name="Radnedge L."/>
            <person name="Larimer F."/>
            <person name="Vergez L.M."/>
            <person name="Worsham P."/>
            <person name="Chu M.C."/>
            <person name="Andersen G.L."/>
        </authorList>
    </citation>
    <scope>NUCLEOTIDE SEQUENCE [LARGE SCALE GENOMIC DNA]</scope>
    <source>
        <strain>Nepal516</strain>
    </source>
</reference>
<reference key="2">
    <citation type="submission" date="2009-04" db="EMBL/GenBank/DDBJ databases">
        <title>Yersinia pestis Nepal516A whole genome shotgun sequencing project.</title>
        <authorList>
            <person name="Plunkett G. III"/>
            <person name="Anderson B.D."/>
            <person name="Baumler D.J."/>
            <person name="Burland V."/>
            <person name="Cabot E.L."/>
            <person name="Glasner J.D."/>
            <person name="Mau B."/>
            <person name="Neeno-Eckwall E."/>
            <person name="Perna N.T."/>
            <person name="Munk A.C."/>
            <person name="Tapia R."/>
            <person name="Green L.D."/>
            <person name="Rogers Y.C."/>
            <person name="Detter J.C."/>
            <person name="Bruce D.C."/>
            <person name="Brettin T.S."/>
        </authorList>
    </citation>
    <scope>NUCLEOTIDE SEQUENCE [LARGE SCALE GENOMIC DNA]</scope>
    <source>
        <strain>Nepal516</strain>
    </source>
</reference>
<dbReference type="EC" id="2.7.1.6" evidence="1"/>
<dbReference type="EMBL" id="CP000305">
    <property type="protein sequence ID" value="ABG19190.1"/>
    <property type="molecule type" value="Genomic_DNA"/>
</dbReference>
<dbReference type="EMBL" id="ACNQ01000017">
    <property type="protein sequence ID" value="EEO75336.1"/>
    <property type="molecule type" value="Genomic_DNA"/>
</dbReference>
<dbReference type="RefSeq" id="WP_002210748.1">
    <property type="nucleotide sequence ID" value="NZ_ACNQ01000017.1"/>
</dbReference>
<dbReference type="SMR" id="Q1CFP0"/>
<dbReference type="GeneID" id="57977277"/>
<dbReference type="KEGG" id="ypn:YPN_2863"/>
<dbReference type="HOGENOM" id="CLU_017814_2_1_6"/>
<dbReference type="UniPathway" id="UPA00214"/>
<dbReference type="Proteomes" id="UP000008936">
    <property type="component" value="Chromosome"/>
</dbReference>
<dbReference type="GO" id="GO:0005829">
    <property type="term" value="C:cytosol"/>
    <property type="evidence" value="ECO:0007669"/>
    <property type="project" value="TreeGrafter"/>
</dbReference>
<dbReference type="GO" id="GO:0005524">
    <property type="term" value="F:ATP binding"/>
    <property type="evidence" value="ECO:0007669"/>
    <property type="project" value="UniProtKB-UniRule"/>
</dbReference>
<dbReference type="GO" id="GO:0004335">
    <property type="term" value="F:galactokinase activity"/>
    <property type="evidence" value="ECO:0007669"/>
    <property type="project" value="UniProtKB-UniRule"/>
</dbReference>
<dbReference type="GO" id="GO:0000287">
    <property type="term" value="F:magnesium ion binding"/>
    <property type="evidence" value="ECO:0007669"/>
    <property type="project" value="UniProtKB-UniRule"/>
</dbReference>
<dbReference type="GO" id="GO:0006012">
    <property type="term" value="P:galactose metabolic process"/>
    <property type="evidence" value="ECO:0007669"/>
    <property type="project" value="UniProtKB-UniRule"/>
</dbReference>
<dbReference type="FunFam" id="3.30.230.10:FF:000017">
    <property type="entry name" value="Galactokinase"/>
    <property type="match status" value="1"/>
</dbReference>
<dbReference type="FunFam" id="3.30.70.890:FF:000001">
    <property type="entry name" value="Galactokinase"/>
    <property type="match status" value="1"/>
</dbReference>
<dbReference type="Gene3D" id="3.30.230.10">
    <property type="match status" value="1"/>
</dbReference>
<dbReference type="Gene3D" id="3.30.70.890">
    <property type="entry name" value="GHMP kinase, C-terminal domain"/>
    <property type="match status" value="1"/>
</dbReference>
<dbReference type="HAMAP" id="MF_00246">
    <property type="entry name" value="Galactokinase"/>
    <property type="match status" value="1"/>
</dbReference>
<dbReference type="InterPro" id="IPR000705">
    <property type="entry name" value="Galactokinase"/>
</dbReference>
<dbReference type="InterPro" id="IPR022963">
    <property type="entry name" value="Galactokinase_bac"/>
</dbReference>
<dbReference type="InterPro" id="IPR019741">
    <property type="entry name" value="Galactokinase_CS"/>
</dbReference>
<dbReference type="InterPro" id="IPR019539">
    <property type="entry name" value="GalKase_N"/>
</dbReference>
<dbReference type="InterPro" id="IPR013750">
    <property type="entry name" value="GHMP_kinase_C_dom"/>
</dbReference>
<dbReference type="InterPro" id="IPR036554">
    <property type="entry name" value="GHMP_kinase_C_sf"/>
</dbReference>
<dbReference type="InterPro" id="IPR006204">
    <property type="entry name" value="GHMP_kinase_N_dom"/>
</dbReference>
<dbReference type="InterPro" id="IPR006203">
    <property type="entry name" value="GHMP_knse_ATP-bd_CS"/>
</dbReference>
<dbReference type="InterPro" id="IPR006206">
    <property type="entry name" value="Mevalonate/galactokinase"/>
</dbReference>
<dbReference type="InterPro" id="IPR020568">
    <property type="entry name" value="Ribosomal_Su5_D2-typ_SF"/>
</dbReference>
<dbReference type="InterPro" id="IPR014721">
    <property type="entry name" value="Ribsml_uS5_D2-typ_fold_subgr"/>
</dbReference>
<dbReference type="NCBIfam" id="TIGR00131">
    <property type="entry name" value="gal_kin"/>
    <property type="match status" value="1"/>
</dbReference>
<dbReference type="NCBIfam" id="NF003472">
    <property type="entry name" value="PRK05101.1"/>
    <property type="match status" value="1"/>
</dbReference>
<dbReference type="PANTHER" id="PTHR10457:SF7">
    <property type="entry name" value="GALACTOKINASE-RELATED"/>
    <property type="match status" value="1"/>
</dbReference>
<dbReference type="PANTHER" id="PTHR10457">
    <property type="entry name" value="MEVALONATE KINASE/GALACTOKINASE"/>
    <property type="match status" value="1"/>
</dbReference>
<dbReference type="Pfam" id="PF10509">
    <property type="entry name" value="GalKase_gal_bdg"/>
    <property type="match status" value="1"/>
</dbReference>
<dbReference type="Pfam" id="PF08544">
    <property type="entry name" value="GHMP_kinases_C"/>
    <property type="match status" value="1"/>
</dbReference>
<dbReference type="Pfam" id="PF00288">
    <property type="entry name" value="GHMP_kinases_N"/>
    <property type="match status" value="1"/>
</dbReference>
<dbReference type="PIRSF" id="PIRSF000530">
    <property type="entry name" value="Galactokinase"/>
    <property type="match status" value="1"/>
</dbReference>
<dbReference type="PRINTS" id="PR00473">
    <property type="entry name" value="GALCTOKINASE"/>
</dbReference>
<dbReference type="PRINTS" id="PR00959">
    <property type="entry name" value="MEVGALKINASE"/>
</dbReference>
<dbReference type="SUPFAM" id="SSF55060">
    <property type="entry name" value="GHMP Kinase, C-terminal domain"/>
    <property type="match status" value="1"/>
</dbReference>
<dbReference type="SUPFAM" id="SSF54211">
    <property type="entry name" value="Ribosomal protein S5 domain 2-like"/>
    <property type="match status" value="1"/>
</dbReference>
<dbReference type="PROSITE" id="PS00106">
    <property type="entry name" value="GALACTOKINASE"/>
    <property type="match status" value="1"/>
</dbReference>
<dbReference type="PROSITE" id="PS00627">
    <property type="entry name" value="GHMP_KINASES_ATP"/>
    <property type="match status" value="1"/>
</dbReference>
<organism>
    <name type="scientific">Yersinia pestis bv. Antiqua (strain Nepal516)</name>
    <dbReference type="NCBI Taxonomy" id="377628"/>
    <lineage>
        <taxon>Bacteria</taxon>
        <taxon>Pseudomonadati</taxon>
        <taxon>Pseudomonadota</taxon>
        <taxon>Gammaproteobacteria</taxon>
        <taxon>Enterobacterales</taxon>
        <taxon>Yersiniaceae</taxon>
        <taxon>Yersinia</taxon>
    </lineage>
</organism>
<feature type="chain" id="PRO_1000005773" description="Galactokinase">
    <location>
        <begin position="1"/>
        <end position="383"/>
    </location>
</feature>
<feature type="active site" description="Proton acceptor" evidence="1">
    <location>
        <position position="174"/>
    </location>
</feature>
<feature type="binding site" evidence="1">
    <location>
        <begin position="34"/>
        <end position="37"/>
    </location>
    <ligand>
        <name>substrate</name>
    </ligand>
</feature>
<feature type="binding site" evidence="1">
    <location>
        <begin position="124"/>
        <end position="130"/>
    </location>
    <ligand>
        <name>ATP</name>
        <dbReference type="ChEBI" id="CHEBI:30616"/>
    </ligand>
</feature>
<feature type="binding site" evidence="1">
    <location>
        <position position="130"/>
    </location>
    <ligand>
        <name>Mg(2+)</name>
        <dbReference type="ChEBI" id="CHEBI:18420"/>
    </ligand>
</feature>
<feature type="binding site" evidence="1">
    <location>
        <position position="162"/>
    </location>
    <ligand>
        <name>Mg(2+)</name>
        <dbReference type="ChEBI" id="CHEBI:18420"/>
    </ligand>
</feature>
<feature type="binding site" evidence="1">
    <location>
        <position position="223"/>
    </location>
    <ligand>
        <name>substrate</name>
    </ligand>
</feature>
<feature type="site" description="Transition state stabilizer" evidence="1">
    <location>
        <position position="28"/>
    </location>
</feature>
<comment type="function">
    <text evidence="1">Catalyzes the transfer of the gamma-phosphate of ATP to D-galactose to form alpha-D-galactose-1-phosphate (Gal-1-P).</text>
</comment>
<comment type="catalytic activity">
    <reaction evidence="1">
        <text>alpha-D-galactose + ATP = alpha-D-galactose 1-phosphate + ADP + H(+)</text>
        <dbReference type="Rhea" id="RHEA:13553"/>
        <dbReference type="ChEBI" id="CHEBI:15378"/>
        <dbReference type="ChEBI" id="CHEBI:28061"/>
        <dbReference type="ChEBI" id="CHEBI:30616"/>
        <dbReference type="ChEBI" id="CHEBI:58336"/>
        <dbReference type="ChEBI" id="CHEBI:456216"/>
        <dbReference type="EC" id="2.7.1.6"/>
    </reaction>
</comment>
<comment type="pathway">
    <text evidence="1">Carbohydrate metabolism; galactose metabolism.</text>
</comment>
<comment type="subcellular location">
    <subcellularLocation>
        <location evidence="1">Cytoplasm</location>
    </subcellularLocation>
</comment>
<comment type="similarity">
    <text evidence="1">Belongs to the GHMP kinase family. GalK subfamily.</text>
</comment>
<keyword id="KW-0067">ATP-binding</keyword>
<keyword id="KW-0119">Carbohydrate metabolism</keyword>
<keyword id="KW-0963">Cytoplasm</keyword>
<keyword id="KW-0299">Galactose metabolism</keyword>
<keyword id="KW-0418">Kinase</keyword>
<keyword id="KW-0460">Magnesium</keyword>
<keyword id="KW-0479">Metal-binding</keyword>
<keyword id="KW-0547">Nucleotide-binding</keyword>
<keyword id="KW-0808">Transferase</keyword>
<protein>
    <recommendedName>
        <fullName evidence="1">Galactokinase</fullName>
        <ecNumber evidence="1">2.7.1.6</ecNumber>
    </recommendedName>
    <alternativeName>
        <fullName evidence="1">Galactose kinase</fullName>
    </alternativeName>
</protein>
<evidence type="ECO:0000255" key="1">
    <source>
        <dbReference type="HAMAP-Rule" id="MF_00246"/>
    </source>
</evidence>
<name>GAL1_YERPN</name>
<proteinExistence type="inferred from homology"/>
<accession>Q1CFP0</accession>
<accession>C4GWN6</accession>